<dbReference type="EMBL" id="D16665">
    <property type="protein sequence ID" value="BAA04070.1"/>
    <property type="molecule type" value="Genomic_DNA"/>
</dbReference>
<dbReference type="SMR" id="Q81163"/>
<dbReference type="Proteomes" id="UP000007926">
    <property type="component" value="Genome"/>
</dbReference>
<dbReference type="GO" id="GO:0033650">
    <property type="term" value="C:host cell mitochondrion"/>
    <property type="evidence" value="ECO:0007669"/>
    <property type="project" value="UniProtKB-SubCell"/>
</dbReference>
<dbReference type="GO" id="GO:0042025">
    <property type="term" value="C:host cell nucleus"/>
    <property type="evidence" value="ECO:0007669"/>
    <property type="project" value="UniProtKB-SubCell"/>
</dbReference>
<dbReference type="GO" id="GO:0006351">
    <property type="term" value="P:DNA-templated transcription"/>
    <property type="evidence" value="ECO:0007669"/>
    <property type="project" value="UniProtKB-UniRule"/>
</dbReference>
<dbReference type="GO" id="GO:0085033">
    <property type="term" value="P:symbiont-mediated activation of host NF-kappaB cascade"/>
    <property type="evidence" value="ECO:0007669"/>
    <property type="project" value="UniProtKB-UniRule"/>
</dbReference>
<dbReference type="GO" id="GO:0039592">
    <property type="term" value="P:symbiont-mediated arrest of host cell cycle during G2/M transition"/>
    <property type="evidence" value="ECO:0007669"/>
    <property type="project" value="UniProtKB-UniRule"/>
</dbReference>
<dbReference type="GO" id="GO:0019079">
    <property type="term" value="P:viral genome replication"/>
    <property type="evidence" value="ECO:0007669"/>
    <property type="project" value="UniProtKB-UniRule"/>
</dbReference>
<dbReference type="HAMAP" id="MF_04074">
    <property type="entry name" value="HBV_X"/>
    <property type="match status" value="1"/>
</dbReference>
<dbReference type="InterPro" id="IPR000236">
    <property type="entry name" value="Transactivation_prot_X"/>
</dbReference>
<dbReference type="Pfam" id="PF00739">
    <property type="entry name" value="X"/>
    <property type="match status" value="1"/>
</dbReference>
<sequence>MAARVCCQLDPARDVLCLRPVGAESRGRPVSGPFGPLPSPSSSAVPADHGAHLSLRGLPVCAFSSAEPCALRLTSARRMETTVNAHQVLPKVLHKRTLGLSAMSTTDLEAYFKDCLFKDWEELGEEIRLKVWRL</sequence>
<comment type="function">
    <text evidence="1">Multifunctional protein that plays a role in silencing host antiviral defenses and promoting viral transcription. Does not seem to be essential for HBV infection. May be directly involved in development of cirrhosis and liver cancer (hepatocellular carcinoma). Most of cytosolic activities involve modulation of cytosolic calcium. The effect on apoptosis is controversial depending on the cell types in which the studies have been conducted. May induce apoptosis by localizing in mitochondria and causing loss of mitochondrial membrane potential. May also modulate apoptosis by binding host CFLAR, a key regulator of the death-inducing signaling complex (DISC). Promotes viral transcription by using the host E3 ubiquitin ligase DDB1 to target the SMC5-SMC6 complex to proteasomal degradation. This host complex would otherwise bind to viral episomal DNA, and prevents its transcription. Moderately stimulates transcription of many different viral and cellular transcription elements. Promoters and enhancers stimulated by HBx contain DNA binding sites for NF-kappa-B, AP-1, AP-2, c-EBP, ATF/CREB, or the calcium-activated factor NF-AT.</text>
</comment>
<comment type="subunit">
    <text evidence="1">May form homodimer. May interact with host CEBPA, CFLAR, CREB1, DDB1, E4F1, HBXIP, HSPD1/HSP60, NFKBIA, POLR2E and SMAD4. Interacts with host SMC5-SMC6 complex and induces its degradation. Interacts with host TRPC4AP; leading to prevent ubiquitination of TRPC4AP. Interacts with host PLSCR1; this interaction promotes ubiquitination and degradation of HBx and impairs HBx-mediated cell proliferation.</text>
</comment>
<comment type="subcellular location">
    <subcellularLocation>
        <location evidence="1">Host cytoplasm</location>
    </subcellularLocation>
    <subcellularLocation>
        <location evidence="1">Host nucleus</location>
    </subcellularLocation>
    <subcellularLocation>
        <location evidence="1">Host mitochondrion</location>
    </subcellularLocation>
    <text evidence="1">Mainly cytoplasmic as only a fraction is detected in the nucleus. In cytoplasm, a minor fraction associates with mitochondria or proteasomes.</text>
</comment>
<comment type="PTM">
    <text evidence="1">A fraction may be phosphorylated in insect cells and HepG2 cells, a human hepatoblastoma cell line. Phosphorylated in vitro by host protein kinase C or mitogen-activated protein kinase. N-acetylated in insect cells.</text>
</comment>
<comment type="similarity">
    <text evidence="1">Belongs to the orthohepadnavirus protein X family.</text>
</comment>
<comment type="caution">
    <text>Transcriptional activities should be taken with a grain of salt. As of 2007, all studies demonstrating in vivo interaction between protein X and transcriptional components were performed with significant overexpression of both proteins and in the absence of viral infection.</text>
</comment>
<gene>
    <name evidence="1" type="primary">X</name>
</gene>
<name>X_HBVC8</name>
<evidence type="ECO:0000255" key="1">
    <source>
        <dbReference type="HAMAP-Rule" id="MF_04074"/>
    </source>
</evidence>
<evidence type="ECO:0000256" key="2">
    <source>
        <dbReference type="SAM" id="MobiDB-lite"/>
    </source>
</evidence>
<organismHost>
    <name type="scientific">Homo sapiens</name>
    <name type="common">Human</name>
    <dbReference type="NCBI Taxonomy" id="9606"/>
</organismHost>
<organismHost>
    <name type="scientific">Pan troglodytes</name>
    <name type="common">Chimpanzee</name>
    <dbReference type="NCBI Taxonomy" id="9598"/>
</organismHost>
<reference key="1">
    <citation type="journal article" date="1992" name="Nucleic Acids Res.">
        <title>The complete nucleotide sequence of hepatitis B virus, subtype adr (SRADR) and phylogenetic analysis.</title>
        <authorList>
            <person name="Mukaide M."/>
        </authorList>
    </citation>
    <scope>NUCLEOTIDE SEQUENCE [GENOMIC DNA]</scope>
</reference>
<reference key="2">
    <citation type="journal article" date="2004" name="J. Virol.">
        <title>The enigmatic X gene of hepatitis B virus.</title>
        <authorList>
            <person name="Bouchard M.J."/>
            <person name="Schneider R.J."/>
        </authorList>
    </citation>
    <scope>REVIEW</scope>
</reference>
<reference key="3">
    <citation type="journal article" date="2006" name="Cancer Sci.">
        <title>Molecular functions and biological roles of hepatitis B virus x protein.</title>
        <authorList>
            <person name="Tang H."/>
            <person name="Oishi N."/>
            <person name="Kaneko S."/>
            <person name="Murakami S."/>
        </authorList>
    </citation>
    <scope>REVIEW</scope>
</reference>
<feature type="chain" id="PRO_0000319908" description="Protein X">
    <location>
        <begin position="1"/>
        <end position="134"/>
    </location>
</feature>
<feature type="region of interest" description="Disordered" evidence="2">
    <location>
        <begin position="25"/>
        <end position="48"/>
    </location>
</feature>
<feature type="region of interest" description="Mitochondrial targeting sequence" evidence="1">
    <location>
        <begin position="68"/>
        <end position="117"/>
    </location>
</feature>
<feature type="compositionally biased region" description="Low complexity" evidence="2">
    <location>
        <begin position="29"/>
        <end position="47"/>
    </location>
</feature>
<accession>Q81163</accession>
<accession>O12443</accession>
<accession>O12739</accession>
<keyword id="KW-1074">Activation of host NF-kappa-B by virus</keyword>
<keyword id="KW-0010">Activator</keyword>
<keyword id="KW-0053">Apoptosis</keyword>
<keyword id="KW-1035">Host cytoplasm</keyword>
<keyword id="KW-1079">Host G2/M cell cycle arrest by virus</keyword>
<keyword id="KW-1045">Host mitochondrion</keyword>
<keyword id="KW-1048">Host nucleus</keyword>
<keyword id="KW-0945">Host-virus interaction</keyword>
<keyword id="KW-1121">Modulation of host cell cycle by virus</keyword>
<keyword id="KW-0804">Transcription</keyword>
<keyword id="KW-0805">Transcription regulation</keyword>
<organism>
    <name type="scientific">Hepatitis B virus genotype C subtype adr (isolate Japan/A4/1994)</name>
    <name type="common">HBV-C</name>
    <dbReference type="NCBI Taxonomy" id="489470"/>
    <lineage>
        <taxon>Viruses</taxon>
        <taxon>Riboviria</taxon>
        <taxon>Pararnavirae</taxon>
        <taxon>Artverviricota</taxon>
        <taxon>Revtraviricetes</taxon>
        <taxon>Blubervirales</taxon>
        <taxon>Hepadnaviridae</taxon>
        <taxon>Orthohepadnavirus</taxon>
        <taxon>Hepatitis B virus</taxon>
        <taxon>hepatitis B virus genotype C</taxon>
    </lineage>
</organism>
<protein>
    <recommendedName>
        <fullName evidence="1">Protein X</fullName>
    </recommendedName>
    <alternativeName>
        <fullName evidence="1">HBx</fullName>
    </alternativeName>
    <alternativeName>
        <fullName evidence="1">Peptide X</fullName>
    </alternativeName>
    <alternativeName>
        <fullName evidence="1">pX</fullName>
    </alternativeName>
</protein>
<proteinExistence type="inferred from homology"/>